<keyword id="KW-0997">Cell inner membrane</keyword>
<keyword id="KW-1003">Cell membrane</keyword>
<keyword id="KW-0472">Membrane</keyword>
<keyword id="KW-0769">Symport</keyword>
<keyword id="KW-0812">Transmembrane</keyword>
<keyword id="KW-1133">Transmembrane helix</keyword>
<keyword id="KW-0813">Transport</keyword>
<accession>A7FP30</accession>
<feature type="chain" id="PRO_1000067474" description="C4-dicarboxylate transport protein">
    <location>
        <begin position="1"/>
        <end position="429"/>
    </location>
</feature>
<feature type="transmembrane region" description="Helical" evidence="1">
    <location>
        <begin position="3"/>
        <end position="23"/>
    </location>
</feature>
<feature type="transmembrane region" description="Helical" evidence="1">
    <location>
        <begin position="44"/>
        <end position="64"/>
    </location>
</feature>
<feature type="transmembrane region" description="Helical" evidence="1">
    <location>
        <begin position="76"/>
        <end position="96"/>
    </location>
</feature>
<feature type="transmembrane region" description="Helical" evidence="1">
    <location>
        <begin position="144"/>
        <end position="164"/>
    </location>
</feature>
<feature type="transmembrane region" description="Helical" evidence="1">
    <location>
        <begin position="184"/>
        <end position="204"/>
    </location>
</feature>
<feature type="transmembrane region" description="Helical" evidence="1">
    <location>
        <begin position="222"/>
        <end position="242"/>
    </location>
</feature>
<feature type="transmembrane region" description="Helical" evidence="1">
    <location>
        <begin position="331"/>
        <end position="351"/>
    </location>
</feature>
<feature type="transmembrane region" description="Helical" evidence="1">
    <location>
        <begin position="352"/>
        <end position="372"/>
    </location>
</feature>
<name>DCTA_YERP3</name>
<proteinExistence type="inferred from homology"/>
<gene>
    <name evidence="1" type="primary">dctA</name>
    <name type="ordered locus">YpsIP31758_4064</name>
</gene>
<protein>
    <recommendedName>
        <fullName evidence="1">C4-dicarboxylate transport protein</fullName>
    </recommendedName>
</protein>
<dbReference type="EMBL" id="CP000720">
    <property type="protein sequence ID" value="ABS47569.1"/>
    <property type="molecule type" value="Genomic_DNA"/>
</dbReference>
<dbReference type="RefSeq" id="WP_012105938.1">
    <property type="nucleotide sequence ID" value="NC_009708.1"/>
</dbReference>
<dbReference type="SMR" id="A7FP30"/>
<dbReference type="KEGG" id="ypi:YpsIP31758_4064"/>
<dbReference type="HOGENOM" id="CLU_019375_7_0_6"/>
<dbReference type="Proteomes" id="UP000002412">
    <property type="component" value="Chromosome"/>
</dbReference>
<dbReference type="GO" id="GO:0005886">
    <property type="term" value="C:plasma membrane"/>
    <property type="evidence" value="ECO:0007669"/>
    <property type="project" value="UniProtKB-SubCell"/>
</dbReference>
<dbReference type="GO" id="GO:0015138">
    <property type="term" value="F:fumarate transmembrane transporter activity"/>
    <property type="evidence" value="ECO:0007669"/>
    <property type="project" value="TreeGrafter"/>
</dbReference>
<dbReference type="GO" id="GO:0015366">
    <property type="term" value="F:malate:proton symporter activity"/>
    <property type="evidence" value="ECO:0007669"/>
    <property type="project" value="TreeGrafter"/>
</dbReference>
<dbReference type="GO" id="GO:0015141">
    <property type="term" value="F:succinate transmembrane transporter activity"/>
    <property type="evidence" value="ECO:0007669"/>
    <property type="project" value="TreeGrafter"/>
</dbReference>
<dbReference type="GO" id="GO:0070778">
    <property type="term" value="P:L-aspartate transmembrane transport"/>
    <property type="evidence" value="ECO:0007669"/>
    <property type="project" value="TreeGrafter"/>
</dbReference>
<dbReference type="FunFam" id="1.10.3860.10:FF:000001">
    <property type="entry name" value="C4-dicarboxylate transport protein"/>
    <property type="match status" value="1"/>
</dbReference>
<dbReference type="Gene3D" id="1.10.3860.10">
    <property type="entry name" value="Sodium:dicarboxylate symporter"/>
    <property type="match status" value="1"/>
</dbReference>
<dbReference type="HAMAP" id="MF_01300">
    <property type="entry name" value="C4_dicarb_transport"/>
    <property type="match status" value="1"/>
</dbReference>
<dbReference type="InterPro" id="IPR023954">
    <property type="entry name" value="C4_dicarb_transport"/>
</dbReference>
<dbReference type="InterPro" id="IPR001991">
    <property type="entry name" value="Na-dicarboxylate_symporter"/>
</dbReference>
<dbReference type="InterPro" id="IPR018107">
    <property type="entry name" value="Na-dicarboxylate_symporter_CS"/>
</dbReference>
<dbReference type="InterPro" id="IPR036458">
    <property type="entry name" value="Na:dicarbo_symporter_sf"/>
</dbReference>
<dbReference type="NCBIfam" id="NF002461">
    <property type="entry name" value="PRK01663.1"/>
    <property type="match status" value="1"/>
</dbReference>
<dbReference type="NCBIfam" id="NF009587">
    <property type="entry name" value="PRK13027.1"/>
    <property type="match status" value="1"/>
</dbReference>
<dbReference type="PANTHER" id="PTHR42865:SF1">
    <property type="entry name" value="AEROBIC C4-DICARBOXYLATE TRANSPORT PROTEIN"/>
    <property type="match status" value="1"/>
</dbReference>
<dbReference type="PANTHER" id="PTHR42865">
    <property type="entry name" value="PROTON/GLUTAMATE-ASPARTATE SYMPORTER"/>
    <property type="match status" value="1"/>
</dbReference>
<dbReference type="Pfam" id="PF00375">
    <property type="entry name" value="SDF"/>
    <property type="match status" value="1"/>
</dbReference>
<dbReference type="PRINTS" id="PR00173">
    <property type="entry name" value="EDTRNSPORT"/>
</dbReference>
<dbReference type="SUPFAM" id="SSF118215">
    <property type="entry name" value="Proton glutamate symport protein"/>
    <property type="match status" value="1"/>
</dbReference>
<dbReference type="PROSITE" id="PS00713">
    <property type="entry name" value="NA_DICARBOXYL_SYMP_1"/>
    <property type="match status" value="1"/>
</dbReference>
<dbReference type="PROSITE" id="PS00714">
    <property type="entry name" value="NA_DICARBOXYL_SYMP_2"/>
    <property type="match status" value="1"/>
</dbReference>
<sequence>MKVSIFKTLYFQVLTAITIGVLLGHFYPEIGAQMKPLGDGFVKLIKMIIAPVIFCTVVTGIAGMESMKAVGRTGAIALLYFEIVSTLALLIGLVVVNVAQPGVGMNIDPATLDAKAVALYAEQASQQGIIPFLLDIIPGSVVGAFASGNILQVLLFAVLFGFALHRLGEKGQLIFNVIESFSRVIFGVINMIMRLAPLGAFGAMAFTIGKYGVGSLVQLGQLILCFYLTCILFVVLVLGTIAKFNGFNIFKFIRYIKEELLIVLGTSSSESVLPRMLDKMENAGCKKSVVGLVIPTGYSFNLDGTSIYLTMAAVFIAQATNTHMDIMHQVTLLVVLLLSSKGAAGVTGSGFIVLAATISAVGHLPLAGLALILGIDRFMSEARALTNLVGNGVATIVVAKWCKQLDNDQLQAVLSNKVLPNVKNSVSVS</sequence>
<comment type="function">
    <text evidence="1">Responsible for the transport of dicarboxylates such as succinate, fumarate, and malate from the periplasm across the membrane.</text>
</comment>
<comment type="subcellular location">
    <subcellularLocation>
        <location evidence="1">Cell inner membrane</location>
        <topology evidence="1">Multi-pass membrane protein</topology>
    </subcellularLocation>
</comment>
<comment type="similarity">
    <text evidence="1">Belongs to the dicarboxylate/amino acid:cation symporter (DAACS) (TC 2.A.23) family.</text>
</comment>
<organism>
    <name type="scientific">Yersinia pseudotuberculosis serotype O:1b (strain IP 31758)</name>
    <dbReference type="NCBI Taxonomy" id="349747"/>
    <lineage>
        <taxon>Bacteria</taxon>
        <taxon>Pseudomonadati</taxon>
        <taxon>Pseudomonadota</taxon>
        <taxon>Gammaproteobacteria</taxon>
        <taxon>Enterobacterales</taxon>
        <taxon>Yersiniaceae</taxon>
        <taxon>Yersinia</taxon>
    </lineage>
</organism>
<reference key="1">
    <citation type="journal article" date="2007" name="PLoS Genet.">
        <title>The complete genome sequence of Yersinia pseudotuberculosis IP31758, the causative agent of Far East scarlet-like fever.</title>
        <authorList>
            <person name="Eppinger M."/>
            <person name="Rosovitz M.J."/>
            <person name="Fricke W.F."/>
            <person name="Rasko D.A."/>
            <person name="Kokorina G."/>
            <person name="Fayolle C."/>
            <person name="Lindler L.E."/>
            <person name="Carniel E."/>
            <person name="Ravel J."/>
        </authorList>
    </citation>
    <scope>NUCLEOTIDE SEQUENCE [LARGE SCALE GENOMIC DNA]</scope>
    <source>
        <strain>IP 31758</strain>
    </source>
</reference>
<evidence type="ECO:0000255" key="1">
    <source>
        <dbReference type="HAMAP-Rule" id="MF_01300"/>
    </source>
</evidence>